<name>ISCS_ECOLU</name>
<comment type="function">
    <text evidence="1">Master enzyme that delivers sulfur to a number of partners involved in Fe-S cluster assembly, tRNA modification or cofactor biosynthesis. Catalyzes the removal of elemental sulfur and selenium atoms from cysteine and selenocysteine to produce alanine. Functions as a sulfur delivery protein for Fe-S cluster synthesis onto IscU, an Fe-S scaffold assembly protein, as well as other S acceptor proteins. Also functions as a selenium delivery protein in the pathway for the biosynthesis of selenophosphate.</text>
</comment>
<comment type="catalytic activity">
    <reaction evidence="1">
        <text>(sulfur carrier)-H + L-cysteine = (sulfur carrier)-SH + L-alanine</text>
        <dbReference type="Rhea" id="RHEA:43892"/>
        <dbReference type="Rhea" id="RHEA-COMP:14737"/>
        <dbReference type="Rhea" id="RHEA-COMP:14739"/>
        <dbReference type="ChEBI" id="CHEBI:29917"/>
        <dbReference type="ChEBI" id="CHEBI:35235"/>
        <dbReference type="ChEBI" id="CHEBI:57972"/>
        <dbReference type="ChEBI" id="CHEBI:64428"/>
        <dbReference type="EC" id="2.8.1.7"/>
    </reaction>
</comment>
<comment type="cofactor">
    <cofactor evidence="1">
        <name>pyridoxal 5'-phosphate</name>
        <dbReference type="ChEBI" id="CHEBI:597326"/>
    </cofactor>
</comment>
<comment type="pathway">
    <text evidence="1">Cofactor biosynthesis; iron-sulfur cluster biosynthesis.</text>
</comment>
<comment type="subunit">
    <text evidence="1">Homodimer. Forms a heterotetramer with IscU, interacts with other sulfur acceptors.</text>
</comment>
<comment type="subcellular location">
    <subcellularLocation>
        <location evidence="1">Cytoplasm</location>
    </subcellularLocation>
</comment>
<comment type="similarity">
    <text evidence="1">Belongs to the class-V pyridoxal-phosphate-dependent aminotransferase family. NifS/IscS subfamily.</text>
</comment>
<evidence type="ECO:0000255" key="1">
    <source>
        <dbReference type="HAMAP-Rule" id="MF_00331"/>
    </source>
</evidence>
<sequence length="404" mass="45090">MKLPIYLDYSATTPVDPRVAEKMMQFMTMDGTFGNPASRSHRFGWQAEEAVDIARNQIADLVGADPREIVFTSGATESDNLAIKGAANFYQKKGKHIITSKTEHKAVLDTCRQLEREGFEVTYLAPQRNGIIDLKELEAAMRDDTILVSIMHVNNEIGVVQDIAAIGEMCRARGIIYHVDATQSVGKLPIDLSQLKVDLMSFSGHKIYGPKGIGALYVRRKPRVRIEAQMHGGGHERGMRSGTLPVHQIVGMGEAYRIAKEEMATEMERLRGLRNRLWNGIKDIEEVYLNGDLEHGAPNILNVSFNYVEGESLIMALKDLAVSSGSACTSASLEPSYVLRALGLNDELAHSSIRFSLGRFTTEEEIDYTIELVRKSIGRLRDLSPLWEMYKQGVDLNSIEWAHH</sequence>
<accession>B7N6B7</accession>
<feature type="chain" id="PRO_1000119626" description="Cysteine desulfurase IscS">
    <location>
        <begin position="1"/>
        <end position="404"/>
    </location>
</feature>
<feature type="active site" description="Cysteine persulfide intermediate" evidence="1">
    <location>
        <position position="328"/>
    </location>
</feature>
<feature type="binding site" evidence="1">
    <location>
        <begin position="75"/>
        <end position="76"/>
    </location>
    <ligand>
        <name>pyridoxal 5'-phosphate</name>
        <dbReference type="ChEBI" id="CHEBI:597326"/>
    </ligand>
</feature>
<feature type="binding site" evidence="1">
    <location>
        <position position="155"/>
    </location>
    <ligand>
        <name>pyridoxal 5'-phosphate</name>
        <dbReference type="ChEBI" id="CHEBI:597326"/>
    </ligand>
</feature>
<feature type="binding site" evidence="1">
    <location>
        <position position="183"/>
    </location>
    <ligand>
        <name>pyridoxal 5'-phosphate</name>
        <dbReference type="ChEBI" id="CHEBI:597326"/>
    </ligand>
</feature>
<feature type="binding site" evidence="1">
    <location>
        <begin position="203"/>
        <end position="205"/>
    </location>
    <ligand>
        <name>pyridoxal 5'-phosphate</name>
        <dbReference type="ChEBI" id="CHEBI:597326"/>
    </ligand>
</feature>
<feature type="binding site" evidence="1">
    <location>
        <position position="243"/>
    </location>
    <ligand>
        <name>pyridoxal 5'-phosphate</name>
        <dbReference type="ChEBI" id="CHEBI:597326"/>
    </ligand>
</feature>
<feature type="binding site" description="via persulfide group" evidence="1">
    <location>
        <position position="328"/>
    </location>
    <ligand>
        <name>[2Fe-2S] cluster</name>
        <dbReference type="ChEBI" id="CHEBI:190135"/>
        <note>ligand shared with IscU</note>
    </ligand>
</feature>
<feature type="modified residue" description="N6-(pyridoxal phosphate)lysine" evidence="1">
    <location>
        <position position="206"/>
    </location>
</feature>
<proteinExistence type="inferred from homology"/>
<keyword id="KW-0001">2Fe-2S</keyword>
<keyword id="KW-0963">Cytoplasm</keyword>
<keyword id="KW-0408">Iron</keyword>
<keyword id="KW-0411">Iron-sulfur</keyword>
<keyword id="KW-0479">Metal-binding</keyword>
<keyword id="KW-0663">Pyridoxal phosphate</keyword>
<keyword id="KW-0808">Transferase</keyword>
<reference key="1">
    <citation type="journal article" date="2009" name="PLoS Genet.">
        <title>Organised genome dynamics in the Escherichia coli species results in highly diverse adaptive paths.</title>
        <authorList>
            <person name="Touchon M."/>
            <person name="Hoede C."/>
            <person name="Tenaillon O."/>
            <person name="Barbe V."/>
            <person name="Baeriswyl S."/>
            <person name="Bidet P."/>
            <person name="Bingen E."/>
            <person name="Bonacorsi S."/>
            <person name="Bouchier C."/>
            <person name="Bouvet O."/>
            <person name="Calteau A."/>
            <person name="Chiapello H."/>
            <person name="Clermont O."/>
            <person name="Cruveiller S."/>
            <person name="Danchin A."/>
            <person name="Diard M."/>
            <person name="Dossat C."/>
            <person name="Karoui M.E."/>
            <person name="Frapy E."/>
            <person name="Garry L."/>
            <person name="Ghigo J.M."/>
            <person name="Gilles A.M."/>
            <person name="Johnson J."/>
            <person name="Le Bouguenec C."/>
            <person name="Lescat M."/>
            <person name="Mangenot S."/>
            <person name="Martinez-Jehanne V."/>
            <person name="Matic I."/>
            <person name="Nassif X."/>
            <person name="Oztas S."/>
            <person name="Petit M.A."/>
            <person name="Pichon C."/>
            <person name="Rouy Z."/>
            <person name="Ruf C.S."/>
            <person name="Schneider D."/>
            <person name="Tourret J."/>
            <person name="Vacherie B."/>
            <person name="Vallenet D."/>
            <person name="Medigue C."/>
            <person name="Rocha E.P.C."/>
            <person name="Denamur E."/>
        </authorList>
    </citation>
    <scope>NUCLEOTIDE SEQUENCE [LARGE SCALE GENOMIC DNA]</scope>
    <source>
        <strain>UMN026 / ExPEC</strain>
    </source>
</reference>
<protein>
    <recommendedName>
        <fullName evidence="1">Cysteine desulfurase IscS</fullName>
        <ecNumber evidence="1">2.8.1.7</ecNumber>
    </recommendedName>
</protein>
<gene>
    <name evidence="1" type="primary">iscS</name>
    <name type="ordered locus">ECUMN_2850</name>
</gene>
<dbReference type="EC" id="2.8.1.7" evidence="1"/>
<dbReference type="EMBL" id="CU928163">
    <property type="protein sequence ID" value="CAR14026.1"/>
    <property type="molecule type" value="Genomic_DNA"/>
</dbReference>
<dbReference type="RefSeq" id="WP_001295373.1">
    <property type="nucleotide sequence ID" value="NC_011751.1"/>
</dbReference>
<dbReference type="RefSeq" id="YP_002413552.1">
    <property type="nucleotide sequence ID" value="NC_011751.1"/>
</dbReference>
<dbReference type="SMR" id="B7N6B7"/>
<dbReference type="STRING" id="585056.ECUMN_2850"/>
<dbReference type="GeneID" id="93774606"/>
<dbReference type="KEGG" id="eum:ECUMN_2850"/>
<dbReference type="PATRIC" id="fig|585056.7.peg.3037"/>
<dbReference type="HOGENOM" id="CLU_003433_0_2_6"/>
<dbReference type="UniPathway" id="UPA00266"/>
<dbReference type="Proteomes" id="UP000007097">
    <property type="component" value="Chromosome"/>
</dbReference>
<dbReference type="GO" id="GO:1990221">
    <property type="term" value="C:L-cysteine desulfurase complex"/>
    <property type="evidence" value="ECO:0007669"/>
    <property type="project" value="UniProtKB-ARBA"/>
</dbReference>
<dbReference type="GO" id="GO:0051537">
    <property type="term" value="F:2 iron, 2 sulfur cluster binding"/>
    <property type="evidence" value="ECO:0007669"/>
    <property type="project" value="UniProtKB-UniRule"/>
</dbReference>
<dbReference type="GO" id="GO:0031071">
    <property type="term" value="F:cysteine desulfurase activity"/>
    <property type="evidence" value="ECO:0007669"/>
    <property type="project" value="UniProtKB-UniRule"/>
</dbReference>
<dbReference type="GO" id="GO:0046872">
    <property type="term" value="F:metal ion binding"/>
    <property type="evidence" value="ECO:0007669"/>
    <property type="project" value="UniProtKB-KW"/>
</dbReference>
<dbReference type="GO" id="GO:0030170">
    <property type="term" value="F:pyridoxal phosphate binding"/>
    <property type="evidence" value="ECO:0007669"/>
    <property type="project" value="UniProtKB-UniRule"/>
</dbReference>
<dbReference type="GO" id="GO:0044571">
    <property type="term" value="P:[2Fe-2S] cluster assembly"/>
    <property type="evidence" value="ECO:0007669"/>
    <property type="project" value="UniProtKB-UniRule"/>
</dbReference>
<dbReference type="FunFam" id="3.40.640.10:FF:000003">
    <property type="entry name" value="Cysteine desulfurase IscS"/>
    <property type="match status" value="1"/>
</dbReference>
<dbReference type="FunFam" id="3.90.1150.10:FF:000002">
    <property type="entry name" value="Cysteine desulfurase IscS"/>
    <property type="match status" value="1"/>
</dbReference>
<dbReference type="Gene3D" id="3.90.1150.10">
    <property type="entry name" value="Aspartate Aminotransferase, domain 1"/>
    <property type="match status" value="1"/>
</dbReference>
<dbReference type="Gene3D" id="3.40.640.10">
    <property type="entry name" value="Type I PLP-dependent aspartate aminotransferase-like (Major domain)"/>
    <property type="match status" value="1"/>
</dbReference>
<dbReference type="HAMAP" id="MF_00331">
    <property type="entry name" value="Cys_desulf_IscS"/>
    <property type="match status" value="1"/>
</dbReference>
<dbReference type="InterPro" id="IPR000192">
    <property type="entry name" value="Aminotrans_V_dom"/>
</dbReference>
<dbReference type="InterPro" id="IPR020578">
    <property type="entry name" value="Aminotrans_V_PyrdxlP_BS"/>
</dbReference>
<dbReference type="InterPro" id="IPR010240">
    <property type="entry name" value="Cys_deSase_IscS"/>
</dbReference>
<dbReference type="InterPro" id="IPR016454">
    <property type="entry name" value="Cysteine_dSase"/>
</dbReference>
<dbReference type="InterPro" id="IPR015424">
    <property type="entry name" value="PyrdxlP-dep_Trfase"/>
</dbReference>
<dbReference type="InterPro" id="IPR015421">
    <property type="entry name" value="PyrdxlP-dep_Trfase_major"/>
</dbReference>
<dbReference type="InterPro" id="IPR015422">
    <property type="entry name" value="PyrdxlP-dep_Trfase_small"/>
</dbReference>
<dbReference type="NCBIfam" id="TIGR02006">
    <property type="entry name" value="IscS"/>
    <property type="match status" value="1"/>
</dbReference>
<dbReference type="NCBIfam" id="NF002806">
    <property type="entry name" value="PRK02948.1"/>
    <property type="match status" value="1"/>
</dbReference>
<dbReference type="NCBIfam" id="NF010611">
    <property type="entry name" value="PRK14012.1"/>
    <property type="match status" value="1"/>
</dbReference>
<dbReference type="PANTHER" id="PTHR11601:SF34">
    <property type="entry name" value="CYSTEINE DESULFURASE"/>
    <property type="match status" value="1"/>
</dbReference>
<dbReference type="PANTHER" id="PTHR11601">
    <property type="entry name" value="CYSTEINE DESULFURYLASE FAMILY MEMBER"/>
    <property type="match status" value="1"/>
</dbReference>
<dbReference type="Pfam" id="PF00266">
    <property type="entry name" value="Aminotran_5"/>
    <property type="match status" value="1"/>
</dbReference>
<dbReference type="PIRSF" id="PIRSF005572">
    <property type="entry name" value="NifS"/>
    <property type="match status" value="1"/>
</dbReference>
<dbReference type="SUPFAM" id="SSF53383">
    <property type="entry name" value="PLP-dependent transferases"/>
    <property type="match status" value="1"/>
</dbReference>
<dbReference type="PROSITE" id="PS00595">
    <property type="entry name" value="AA_TRANSFER_CLASS_5"/>
    <property type="match status" value="1"/>
</dbReference>
<organism>
    <name type="scientific">Escherichia coli O17:K52:H18 (strain UMN026 / ExPEC)</name>
    <dbReference type="NCBI Taxonomy" id="585056"/>
    <lineage>
        <taxon>Bacteria</taxon>
        <taxon>Pseudomonadati</taxon>
        <taxon>Pseudomonadota</taxon>
        <taxon>Gammaproteobacteria</taxon>
        <taxon>Enterobacterales</taxon>
        <taxon>Enterobacteriaceae</taxon>
        <taxon>Escherichia</taxon>
    </lineage>
</organism>